<feature type="chain" id="PRO_0000211316" description="DASH complex subunit ask1">
    <location>
        <begin position="1"/>
        <end position="307"/>
    </location>
</feature>
<feature type="region of interest" description="Disordered" evidence="2">
    <location>
        <begin position="117"/>
        <end position="137"/>
    </location>
</feature>
<feature type="region of interest" description="Disordered" evidence="2">
    <location>
        <begin position="250"/>
        <end position="307"/>
    </location>
</feature>
<feature type="compositionally biased region" description="Polar residues" evidence="2">
    <location>
        <begin position="250"/>
        <end position="284"/>
    </location>
</feature>
<feature type="compositionally biased region" description="Basic and acidic residues" evidence="2">
    <location>
        <begin position="298"/>
        <end position="307"/>
    </location>
</feature>
<feature type="modified residue" description="Phosphothreonine" evidence="8">
    <location>
        <position position="136"/>
    </location>
</feature>
<feature type="mutagenesis site" description="Abolishes phosphorylation of dam1 on 'Ser-143'." evidence="10">
    <original>T</original>
    <variation>A</variation>
    <location>
        <position position="136"/>
    </location>
</feature>
<reference key="1">
    <citation type="submission" date="1996-03" db="EMBL/GenBank/DDBJ databases">
        <title>S.pombe chromosome II cosmid 1228 sequence.</title>
        <authorList>
            <person name="Kohnosu A."/>
            <person name="Niwa O."/>
            <person name="Yano M."/>
            <person name="Saitoh S."/>
            <person name="Katayama T."/>
            <person name="Nagao K."/>
            <person name="Yanagida M."/>
        </authorList>
    </citation>
    <scope>NUCLEOTIDE SEQUENCE [GENOMIC DNA]</scope>
    <source>
        <strain>972 / ATCC 24843</strain>
    </source>
</reference>
<reference key="2">
    <citation type="journal article" date="2002" name="Nature">
        <title>The genome sequence of Schizosaccharomyces pombe.</title>
        <authorList>
            <person name="Wood V."/>
            <person name="Gwilliam R."/>
            <person name="Rajandream M.A."/>
            <person name="Lyne M.H."/>
            <person name="Lyne R."/>
            <person name="Stewart A."/>
            <person name="Sgouros J.G."/>
            <person name="Peat N."/>
            <person name="Hayles J."/>
            <person name="Baker S.G."/>
            <person name="Basham D."/>
            <person name="Bowman S."/>
            <person name="Brooks K."/>
            <person name="Brown D."/>
            <person name="Brown S."/>
            <person name="Chillingworth T."/>
            <person name="Churcher C.M."/>
            <person name="Collins M."/>
            <person name="Connor R."/>
            <person name="Cronin A."/>
            <person name="Davis P."/>
            <person name="Feltwell T."/>
            <person name="Fraser A."/>
            <person name="Gentles S."/>
            <person name="Goble A."/>
            <person name="Hamlin N."/>
            <person name="Harris D.E."/>
            <person name="Hidalgo J."/>
            <person name="Hodgson G."/>
            <person name="Holroyd S."/>
            <person name="Hornsby T."/>
            <person name="Howarth S."/>
            <person name="Huckle E.J."/>
            <person name="Hunt S."/>
            <person name="Jagels K."/>
            <person name="James K.D."/>
            <person name="Jones L."/>
            <person name="Jones M."/>
            <person name="Leather S."/>
            <person name="McDonald S."/>
            <person name="McLean J."/>
            <person name="Mooney P."/>
            <person name="Moule S."/>
            <person name="Mungall K.L."/>
            <person name="Murphy L.D."/>
            <person name="Niblett D."/>
            <person name="Odell C."/>
            <person name="Oliver K."/>
            <person name="O'Neil S."/>
            <person name="Pearson D."/>
            <person name="Quail M.A."/>
            <person name="Rabbinowitsch E."/>
            <person name="Rutherford K.M."/>
            <person name="Rutter S."/>
            <person name="Saunders D."/>
            <person name="Seeger K."/>
            <person name="Sharp S."/>
            <person name="Skelton J."/>
            <person name="Simmonds M.N."/>
            <person name="Squares R."/>
            <person name="Squares S."/>
            <person name="Stevens K."/>
            <person name="Taylor K."/>
            <person name="Taylor R.G."/>
            <person name="Tivey A."/>
            <person name="Walsh S.V."/>
            <person name="Warren T."/>
            <person name="Whitehead S."/>
            <person name="Woodward J.R."/>
            <person name="Volckaert G."/>
            <person name="Aert R."/>
            <person name="Robben J."/>
            <person name="Grymonprez B."/>
            <person name="Weltjens I."/>
            <person name="Vanstreels E."/>
            <person name="Rieger M."/>
            <person name="Schaefer M."/>
            <person name="Mueller-Auer S."/>
            <person name="Gabel C."/>
            <person name="Fuchs M."/>
            <person name="Duesterhoeft A."/>
            <person name="Fritzc C."/>
            <person name="Holzer E."/>
            <person name="Moestl D."/>
            <person name="Hilbert H."/>
            <person name="Borzym K."/>
            <person name="Langer I."/>
            <person name="Beck A."/>
            <person name="Lehrach H."/>
            <person name="Reinhardt R."/>
            <person name="Pohl T.M."/>
            <person name="Eger P."/>
            <person name="Zimmermann W."/>
            <person name="Wedler H."/>
            <person name="Wambutt R."/>
            <person name="Purnelle B."/>
            <person name="Goffeau A."/>
            <person name="Cadieu E."/>
            <person name="Dreano S."/>
            <person name="Gloux S."/>
            <person name="Lelaure V."/>
            <person name="Mottier S."/>
            <person name="Galibert F."/>
            <person name="Aves S.J."/>
            <person name="Xiang Z."/>
            <person name="Hunt C."/>
            <person name="Moore K."/>
            <person name="Hurst S.M."/>
            <person name="Lucas M."/>
            <person name="Rochet M."/>
            <person name="Gaillardin C."/>
            <person name="Tallada V.A."/>
            <person name="Garzon A."/>
            <person name="Thode G."/>
            <person name="Daga R.R."/>
            <person name="Cruzado L."/>
            <person name="Jimenez J."/>
            <person name="Sanchez M."/>
            <person name="del Rey F."/>
            <person name="Benito J."/>
            <person name="Dominguez A."/>
            <person name="Revuelta J.L."/>
            <person name="Moreno S."/>
            <person name="Armstrong J."/>
            <person name="Forsburg S.L."/>
            <person name="Cerutti L."/>
            <person name="Lowe T."/>
            <person name="McCombie W.R."/>
            <person name="Paulsen I."/>
            <person name="Potashkin J."/>
            <person name="Shpakovski G.V."/>
            <person name="Ussery D."/>
            <person name="Barrell B.G."/>
            <person name="Nurse P."/>
        </authorList>
    </citation>
    <scope>NUCLEOTIDE SEQUENCE [LARGE SCALE GENOMIC DNA]</scope>
    <source>
        <strain>972 / ATCC 24843</strain>
    </source>
</reference>
<reference key="3">
    <citation type="journal article" date="2005" name="Curr. Biol.">
        <title>A large-scale screen in S. pombe identifies seven novel genes required for critical meiotic events.</title>
        <authorList>
            <person name="Martin-Castellanos C."/>
            <person name="Blanco M."/>
            <person name="Rozalen A.E."/>
            <person name="Perez-Hidalgo L."/>
            <person name="Garcia A.I."/>
            <person name="Conde F."/>
            <person name="Mata J."/>
            <person name="Ellermeier C."/>
            <person name="Davis L."/>
            <person name="San-Segundo P."/>
            <person name="Smith G.R."/>
            <person name="Moreno S."/>
        </authorList>
    </citation>
    <scope>FUNCTION</scope>
</reference>
<reference key="4">
    <citation type="journal article" date="2005" name="EMBO J.">
        <title>Molecular analysis of kinetochore architecture in fission yeast.</title>
        <authorList>
            <person name="Liu X."/>
            <person name="McLeod I."/>
            <person name="Anderson S."/>
            <person name="Yates J.R. III"/>
            <person name="He X."/>
        </authorList>
    </citation>
    <scope>FUNCTION</scope>
    <scope>IDENTIFICATION IN THE DASH COMPLEX</scope>
    <scope>SUBCELLULAR LOCATION</scope>
    <scope>PHOSPHORYLATION</scope>
</reference>
<reference key="5">
    <citation type="journal article" date="2005" name="EMBO J.">
        <title>The DASH complex and Klp5/Klp6 kinesin coordinate bipolar chromosome attachment in fission yeast.</title>
        <authorList>
            <person name="Sanchez-Perez I."/>
            <person name="Renwick S.J."/>
            <person name="Crawley K."/>
            <person name="Karig I."/>
            <person name="Buck V."/>
            <person name="Meadows J.C."/>
            <person name="Franco-Sanchez A."/>
            <person name="Fleig U."/>
            <person name="Toda T."/>
            <person name="Millar J.B."/>
        </authorList>
    </citation>
    <scope>FUNCTION</scope>
    <scope>DISRUPTION PHENOTYPE</scope>
</reference>
<reference key="6">
    <citation type="journal article" date="2006" name="Nat. Biotechnol.">
        <title>ORFeome cloning and global analysis of protein localization in the fission yeast Schizosaccharomyces pombe.</title>
        <authorList>
            <person name="Matsuyama A."/>
            <person name="Arai R."/>
            <person name="Yashiroda Y."/>
            <person name="Shirai A."/>
            <person name="Kamata A."/>
            <person name="Sekido S."/>
            <person name="Kobayashi Y."/>
            <person name="Hashimoto A."/>
            <person name="Hamamoto M."/>
            <person name="Hiraoka Y."/>
            <person name="Horinouchi S."/>
            <person name="Yoshida M."/>
        </authorList>
    </citation>
    <scope>SUBCELLULAR LOCATION [LARGE SCALE ANALYSIS]</scope>
</reference>
<reference key="7">
    <citation type="journal article" date="2008" name="J. Proteome Res.">
        <title>Phosphoproteome analysis of fission yeast.</title>
        <authorList>
            <person name="Wilson-Grady J.T."/>
            <person name="Villen J."/>
            <person name="Gygi S.P."/>
        </authorList>
    </citation>
    <scope>PHOSPHORYLATION [LARGE SCALE ANALYSIS] AT THR-136</scope>
    <scope>IDENTIFICATION BY MASS SPECTROMETRY</scope>
</reference>
<reference key="8">
    <citation type="journal article" date="2008" name="Mol. Biol. Cell">
        <title>Sister kinetochore recapture in fission yeast occurs by two distinct mechanisms, both requiring Dam1 and Klp2.</title>
        <authorList>
            <person name="Gachet Y."/>
            <person name="Reyes C."/>
            <person name="Courtheoux T."/>
            <person name="Goldstone S."/>
            <person name="Gay G."/>
            <person name="Serrurier C."/>
            <person name="Tournier S."/>
        </authorList>
    </citation>
    <scope>FUNCTION</scope>
    <scope>SUBCELLULAR LOCATION</scope>
</reference>
<reference key="9">
    <citation type="journal article" date="2010" name="Proc. Natl. Acad. Sci. U.S.A.">
        <title>A non-ring-like form of the Dam1 complex modulates microtubule dynamics in fission yeast.</title>
        <authorList>
            <person name="Gao Q."/>
            <person name="Courtheoux T."/>
            <person name="Gachet Y."/>
            <person name="Tournier S."/>
            <person name="He X."/>
        </authorList>
    </citation>
    <scope>FUNCTION</scope>
    <scope>SUBUNIT</scope>
    <scope>SUBCELLULAR LOCATION</scope>
    <scope>DISRUPTION PHENOTYPE</scope>
</reference>
<reference key="10">
    <citation type="journal article" date="2012" name="J. Cell Sci.">
        <title>Plo1 phosphorylates Dam1 to promote chromosome bi-orientation in fission yeast.</title>
        <authorList>
            <person name="Buttrick G.J."/>
            <person name="Lancaster T.C."/>
            <person name="Meadows J.C."/>
            <person name="Millar J.B."/>
        </authorList>
    </citation>
    <scope>INTERACTION WITH DAM1</scope>
    <scope>MUTAGENESIS OF THR-136</scope>
</reference>
<organism>
    <name type="scientific">Schizosaccharomyces pombe (strain 972 / ATCC 24843)</name>
    <name type="common">Fission yeast</name>
    <dbReference type="NCBI Taxonomy" id="284812"/>
    <lineage>
        <taxon>Eukaryota</taxon>
        <taxon>Fungi</taxon>
        <taxon>Dikarya</taxon>
        <taxon>Ascomycota</taxon>
        <taxon>Taphrinomycotina</taxon>
        <taxon>Schizosaccharomycetes</taxon>
        <taxon>Schizosaccharomycetales</taxon>
        <taxon>Schizosaccharomycetaceae</taxon>
        <taxon>Schizosaccharomyces</taxon>
    </lineage>
</organism>
<comment type="function">
    <text evidence="4 5 6 7 9">Component of the DASH complex that connects microtubules with kinetochores and couples microtubule depolymerisation to chromosome movement; it is involved in retrieving kinetochores to the spindle poles before their re-orientation on the spindle in early mitosis and allows microtubule depolymerization to pull chromosomes apart and resist detachment during anaphase (PubMed:16079914, PubMed:18256284, PubMed:20624975). Kinetochores, consisting of a centromere-associated inner segment and a microtubule-contacting outer segment, play a crucial role in chromosome segregation by mediating the physical connection between centromeric DNA and microtubules (PubMed:16079914, PubMed:20624975). Kinetochores also serve as an input point for the spindle assembly checkpoint, which delays anaphase until all chromosomes have bioriented on the mitotic spindle (PubMed:16079915). The DASH complex mediates bipolar kinetochore-microtubule attachments and facilitates the formation of additional interactions between outer kinetochore components and spindle microtubules (PubMed:16079914). During chromosome movement along the microtubule, it is required both for the sliding of kinetochores along the lateral side of the microtubule and also for microtubule end-on pulling on the kinetochore (PubMed:18256284). Modulates cytoplasmic microtubule dynamics by tracking the plus-end of shortening microtubules and slowing their depolymerization (PubMed:20624975). Plays a role in meiosis (PubMed:16303567).</text>
</comment>
<comment type="subunit">
    <text evidence="1 4 9 10">Component of the DASH complex consisting of ask1, dad1, dad2, dad3, dad4, dam1, duo1, dad5, spc19 and spc34, with a stoichiometry of one copy of each subunit per complex (PubMed:16079914, PubMed:22375062). Multiple DASH complexes oligomerize to form a ring that encircles spindle microtubules and organizes the rod-like NDC80 complexes of the outer kinetochore (By similarity). DASH complex oligomerization strengthens microtubule attachments (By similarity). On cytoplasmic microtubules, DASH complexes appear to form patches instead of rings (PubMed:20624975).</text>
</comment>
<comment type="subcellular location">
    <subcellularLocation>
        <location evidence="3 9">Nucleus</location>
    </subcellularLocation>
    <subcellularLocation>
        <location evidence="3 9">Cytoplasm</location>
        <location evidence="3 9">Cytoskeleton</location>
        <location evidence="3 9">Spindle</location>
    </subcellularLocation>
    <subcellularLocation>
        <location evidence="3 9">Chromosome</location>
        <location evidence="3 9">Centromere</location>
        <location evidence="3 9">Kinetochore</location>
    </subcellularLocation>
    <subcellularLocation>
        <location evidence="9">Cytoplasm</location>
        <location evidence="9">Cytoskeleton</location>
    </subcellularLocation>
    <text evidence="3 7 9">Associates with the mitotic spindle and the kinetochore. Kinetochore association occurs only during mitosis (PubMed:11859360). Localizes to cortical microtubules (PubMed:20624975). During metaphase, localizes to the plus-ends of intranuclear microtubules (INMs) (PubMed:18256284). Does not localize to cytoplasmic microtubules (PubMed:18256284).</text>
</comment>
<comment type="disruption phenotype">
    <text evidence="5 9">Sensitive to thiabendazole and osmotic stress (PubMed:16079915, PubMed:20624975). Double knockout of mal3 and ask1 leads to cell shape defects, including 6% T-shaped cells (PubMed:20624975).</text>
</comment>
<comment type="similarity">
    <text evidence="11">Belongs to the DASH complex ASK1 family.</text>
</comment>
<comment type="sequence caution" evidence="11">
    <conflict type="erroneous gene model prediction">
        <sequence resource="EMBL-CDS" id="BAA12199"/>
    </conflict>
</comment>
<sequence length="307" mass="34593">MNNLEQLERLEQSITLALYEIDANFSKCHRTVTTKILPIVEKYAKNCNTIWDSSKFWKQFFEASANVSLSGVEEPVPVESNPSDQDVMSNSTEADLQLHTKNEHLEKRHSFVGKSDFPDAAVQGDNTKNEDFVQSTPKKMDVSLEDISLDDAALTPIPARMQTPLRKPENNPHTGRSALLHRVLDTNWQVQVTPREPKNLQSQEVMDIDSSPFVSPSPISMKMDMPSLNDRNSSHALSLFAEFEHESYDSINPSGMSPPKTIQFSPHTMGVGSSQQANERSLSLQRKLETLNDSNDSFVKEEDSWEL</sequence>
<name>ASK1_SCHPO</name>
<proteinExistence type="evidence at protein level"/>
<protein>
    <recommendedName>
        <fullName>DASH complex subunit ask1</fullName>
    </recommendedName>
    <alternativeName>
        <fullName>Associated with spindles and kinetochores protein 1</fullName>
    </alternativeName>
    <alternativeName>
        <fullName>Meiotically up-regulated gene 181 protein</fullName>
    </alternativeName>
    <alternativeName>
        <fullName>Outer kinetochore protein ask1</fullName>
    </alternativeName>
</protein>
<accession>Q9P6S5</accession>
<accession>P78949</accession>
<keyword id="KW-0131">Cell cycle</keyword>
<keyword id="KW-0132">Cell division</keyword>
<keyword id="KW-0137">Centromere</keyword>
<keyword id="KW-0158">Chromosome</keyword>
<keyword id="KW-0159">Chromosome partition</keyword>
<keyword id="KW-0963">Cytoplasm</keyword>
<keyword id="KW-0206">Cytoskeleton</keyword>
<keyword id="KW-0995">Kinetochore</keyword>
<keyword id="KW-0469">Meiosis</keyword>
<keyword id="KW-0493">Microtubule</keyword>
<keyword id="KW-0498">Mitosis</keyword>
<keyword id="KW-0539">Nucleus</keyword>
<keyword id="KW-0597">Phosphoprotein</keyword>
<keyword id="KW-1185">Reference proteome</keyword>
<gene>
    <name type="primary">ask1</name>
    <name type="synonym">mug181</name>
    <name type="ORF">SPBC27.02c</name>
</gene>
<evidence type="ECO:0000250" key="1">
    <source>
        <dbReference type="UniProtKB" id="P35734"/>
    </source>
</evidence>
<evidence type="ECO:0000256" key="2">
    <source>
        <dbReference type="SAM" id="MobiDB-lite"/>
    </source>
</evidence>
<evidence type="ECO:0000269" key="3">
    <source>
    </source>
</evidence>
<evidence type="ECO:0000269" key="4">
    <source>
    </source>
</evidence>
<evidence type="ECO:0000269" key="5">
    <source>
    </source>
</evidence>
<evidence type="ECO:0000269" key="6">
    <source>
    </source>
</evidence>
<evidence type="ECO:0000269" key="7">
    <source>
    </source>
</evidence>
<evidence type="ECO:0000269" key="8">
    <source>
    </source>
</evidence>
<evidence type="ECO:0000269" key="9">
    <source>
    </source>
</evidence>
<evidence type="ECO:0000269" key="10">
    <source>
    </source>
</evidence>
<evidence type="ECO:0000305" key="11"/>
<dbReference type="EMBL" id="D83993">
    <property type="protein sequence ID" value="BAA12199.1"/>
    <property type="status" value="ALT_SEQ"/>
    <property type="molecule type" value="Genomic_DNA"/>
</dbReference>
<dbReference type="EMBL" id="CU329671">
    <property type="protein sequence ID" value="CAB89002.1"/>
    <property type="molecule type" value="Genomic_DNA"/>
</dbReference>
<dbReference type="RefSeq" id="NP_595657.1">
    <property type="nucleotide sequence ID" value="NM_001021551.2"/>
</dbReference>
<dbReference type="SMR" id="Q9P6S5"/>
<dbReference type="BioGRID" id="277026">
    <property type="interactions" value="363"/>
</dbReference>
<dbReference type="ComplexPortal" id="CPX-10081">
    <property type="entry name" value="DASH complex"/>
</dbReference>
<dbReference type="FunCoup" id="Q9P6S5">
    <property type="interactions" value="15"/>
</dbReference>
<dbReference type="STRING" id="284812.Q9P6S5"/>
<dbReference type="iPTMnet" id="Q9P6S5"/>
<dbReference type="PaxDb" id="4896-SPBC27.02c.1"/>
<dbReference type="EnsemblFungi" id="SPBC27.02c.1">
    <property type="protein sequence ID" value="SPBC27.02c.1:pep"/>
    <property type="gene ID" value="SPBC27.02c"/>
</dbReference>
<dbReference type="GeneID" id="2540498"/>
<dbReference type="KEGG" id="spo:2540498"/>
<dbReference type="PomBase" id="SPBC27.02c">
    <property type="gene designation" value="ask1"/>
</dbReference>
<dbReference type="VEuPathDB" id="FungiDB:SPBC27.02c"/>
<dbReference type="eggNOG" id="ENOG502RZQN">
    <property type="taxonomic scope" value="Eukaryota"/>
</dbReference>
<dbReference type="HOGENOM" id="CLU_906607_0_0_1"/>
<dbReference type="InParanoid" id="Q9P6S5"/>
<dbReference type="OMA" id="SNDSLMP"/>
<dbReference type="PhylomeDB" id="Q9P6S5"/>
<dbReference type="PRO" id="PR:Q9P6S5"/>
<dbReference type="Proteomes" id="UP000002485">
    <property type="component" value="Chromosome II"/>
</dbReference>
<dbReference type="GO" id="GO:0000779">
    <property type="term" value="C:condensed chromosome, centromeric region"/>
    <property type="evidence" value="ECO:0000314"/>
    <property type="project" value="PomBase"/>
</dbReference>
<dbReference type="GO" id="GO:0005829">
    <property type="term" value="C:cytosol"/>
    <property type="evidence" value="ECO:0007005"/>
    <property type="project" value="PomBase"/>
</dbReference>
<dbReference type="GO" id="GO:0042729">
    <property type="term" value="C:DASH complex"/>
    <property type="evidence" value="ECO:0000314"/>
    <property type="project" value="PomBase"/>
</dbReference>
<dbReference type="GO" id="GO:0000776">
    <property type="term" value="C:kinetochore"/>
    <property type="evidence" value="ECO:0000314"/>
    <property type="project" value="PomBase"/>
</dbReference>
<dbReference type="GO" id="GO:1990941">
    <property type="term" value="C:mitotic spindle kinetochore microtubule"/>
    <property type="evidence" value="ECO:0000314"/>
    <property type="project" value="PomBase"/>
</dbReference>
<dbReference type="GO" id="GO:1990537">
    <property type="term" value="C:mitotic spindle polar microtubule"/>
    <property type="evidence" value="ECO:0000314"/>
    <property type="project" value="PomBase"/>
</dbReference>
<dbReference type="GO" id="GO:0044732">
    <property type="term" value="C:mitotic spindle pole body"/>
    <property type="evidence" value="ECO:0000314"/>
    <property type="project" value="PomBase"/>
</dbReference>
<dbReference type="GO" id="GO:0005634">
    <property type="term" value="C:nucleus"/>
    <property type="evidence" value="ECO:0007005"/>
    <property type="project" value="PomBase"/>
</dbReference>
<dbReference type="GO" id="GO:0051301">
    <property type="term" value="P:cell division"/>
    <property type="evidence" value="ECO:0007669"/>
    <property type="project" value="UniProtKB-KW"/>
</dbReference>
<dbReference type="GO" id="GO:0043622">
    <property type="term" value="P:cortical microtubule organization"/>
    <property type="evidence" value="ECO:0000316"/>
    <property type="project" value="PomBase"/>
</dbReference>
<dbReference type="GO" id="GO:1990758">
    <property type="term" value="P:mitotic sister chromatid biorientation"/>
    <property type="evidence" value="ECO:0000269"/>
    <property type="project" value="UniProtKB"/>
</dbReference>
<dbReference type="GO" id="GO:1990976">
    <property type="term" value="P:protein transport along microtubule to mitotic spindle pole body"/>
    <property type="evidence" value="ECO:0000250"/>
    <property type="project" value="UniProtKB"/>
</dbReference>
<dbReference type="GO" id="GO:0051455">
    <property type="term" value="P:spindle attachment to meiosis I kinetochore"/>
    <property type="evidence" value="ECO:0000305"/>
    <property type="project" value="PomBase"/>
</dbReference>
<dbReference type="InterPro" id="IPR013964">
    <property type="entry name" value="DASH_Ask1"/>
</dbReference>
<dbReference type="PANTHER" id="PTHR28200">
    <property type="entry name" value="DASH COMPLEX SUBUNIT ASK1"/>
    <property type="match status" value="1"/>
</dbReference>
<dbReference type="PANTHER" id="PTHR28200:SF1">
    <property type="entry name" value="DASH COMPLEX SUBUNIT ASK1"/>
    <property type="match status" value="1"/>
</dbReference>
<dbReference type="Pfam" id="PF08655">
    <property type="entry name" value="DASH_Ask1"/>
    <property type="match status" value="1"/>
</dbReference>